<feature type="chain" id="PRO_0000151735" description="Riboflavin biosynthesis protein RibBA">
    <location>
        <begin position="1"/>
        <end position="393"/>
    </location>
</feature>
<feature type="region of interest" description="DHBP synthase">
    <location>
        <begin position="1"/>
        <end position="200"/>
    </location>
</feature>
<feature type="region of interest" description="GTP cyclohydrolase II">
    <location>
        <begin position="201"/>
        <end position="393"/>
    </location>
</feature>
<feature type="active site" description="Proton acceptor; for GTP cyclohydrolase activity" evidence="1">
    <location>
        <position position="325"/>
    </location>
</feature>
<feature type="active site" description="Nucleophile; for GTP cyclohydrolase activity" evidence="1">
    <location>
        <position position="327"/>
    </location>
</feature>
<feature type="binding site" evidence="1">
    <location>
        <begin position="27"/>
        <end position="28"/>
    </location>
    <ligand>
        <name>D-ribulose 5-phosphate</name>
        <dbReference type="ChEBI" id="CHEBI:58121"/>
    </ligand>
</feature>
<feature type="binding site" evidence="1">
    <location>
        <position position="28"/>
    </location>
    <ligand>
        <name>Mg(2+)</name>
        <dbReference type="ChEBI" id="CHEBI:18420"/>
        <label>1</label>
    </ligand>
</feature>
<feature type="binding site" evidence="1">
    <location>
        <position position="28"/>
    </location>
    <ligand>
        <name>Mg(2+)</name>
        <dbReference type="ChEBI" id="CHEBI:18420"/>
        <label>2</label>
    </ligand>
</feature>
<feature type="binding site" evidence="1">
    <location>
        <position position="32"/>
    </location>
    <ligand>
        <name>D-ribulose 5-phosphate</name>
        <dbReference type="ChEBI" id="CHEBI:58121"/>
    </ligand>
</feature>
<feature type="binding site" evidence="1">
    <location>
        <begin position="139"/>
        <end position="143"/>
    </location>
    <ligand>
        <name>D-ribulose 5-phosphate</name>
        <dbReference type="ChEBI" id="CHEBI:58121"/>
    </ligand>
</feature>
<feature type="binding site" evidence="1">
    <location>
        <position position="142"/>
    </location>
    <ligand>
        <name>Mg(2+)</name>
        <dbReference type="ChEBI" id="CHEBI:18420"/>
        <label>2</label>
    </ligand>
</feature>
<feature type="binding site" evidence="1">
    <location>
        <position position="163"/>
    </location>
    <ligand>
        <name>D-ribulose 5-phosphate</name>
        <dbReference type="ChEBI" id="CHEBI:58121"/>
    </ligand>
</feature>
<feature type="binding site" evidence="1">
    <location>
        <begin position="249"/>
        <end position="253"/>
    </location>
    <ligand>
        <name>GTP</name>
        <dbReference type="ChEBI" id="CHEBI:37565"/>
    </ligand>
</feature>
<feature type="binding site" evidence="1">
    <location>
        <position position="254"/>
    </location>
    <ligand>
        <name>Zn(2+)</name>
        <dbReference type="ChEBI" id="CHEBI:29105"/>
        <note>catalytic</note>
    </ligand>
</feature>
<feature type="binding site" evidence="1">
    <location>
        <position position="265"/>
    </location>
    <ligand>
        <name>Zn(2+)</name>
        <dbReference type="ChEBI" id="CHEBI:29105"/>
        <note>catalytic</note>
    </ligand>
</feature>
<feature type="binding site" evidence="1">
    <location>
        <position position="267"/>
    </location>
    <ligand>
        <name>Zn(2+)</name>
        <dbReference type="ChEBI" id="CHEBI:29105"/>
        <note>catalytic</note>
    </ligand>
</feature>
<feature type="binding site" evidence="1">
    <location>
        <position position="270"/>
    </location>
    <ligand>
        <name>GTP</name>
        <dbReference type="ChEBI" id="CHEBI:37565"/>
    </ligand>
</feature>
<feature type="binding site" evidence="1">
    <location>
        <begin position="291"/>
        <end position="293"/>
    </location>
    <ligand>
        <name>GTP</name>
        <dbReference type="ChEBI" id="CHEBI:37565"/>
    </ligand>
</feature>
<feature type="binding site" evidence="1">
    <location>
        <position position="313"/>
    </location>
    <ligand>
        <name>GTP</name>
        <dbReference type="ChEBI" id="CHEBI:37565"/>
    </ligand>
</feature>
<feature type="binding site" evidence="1">
    <location>
        <position position="348"/>
    </location>
    <ligand>
        <name>GTP</name>
        <dbReference type="ChEBI" id="CHEBI:37565"/>
    </ligand>
</feature>
<feature type="binding site" evidence="1">
    <location>
        <position position="353"/>
    </location>
    <ligand>
        <name>GTP</name>
        <dbReference type="ChEBI" id="CHEBI:37565"/>
    </ligand>
</feature>
<feature type="site" description="Essential for DHBP synthase activity" evidence="1">
    <location>
        <position position="125"/>
    </location>
</feature>
<feature type="site" description="Essential for DHBP synthase activity" evidence="1">
    <location>
        <position position="163"/>
    </location>
</feature>
<comment type="function">
    <text evidence="1">Catalyzes the conversion of D-ribulose 5-phosphate to formate and 3,4-dihydroxy-2-butanone 4-phosphate.</text>
</comment>
<comment type="function">
    <text evidence="1">Catalyzes the conversion of GTP to 2,5-diamino-6-ribosylamino-4(3H)-pyrimidinone 5'-phosphate (DARP), formate and pyrophosphate.</text>
</comment>
<comment type="catalytic activity">
    <reaction evidence="1">
        <text>D-ribulose 5-phosphate = (2S)-2-hydroxy-3-oxobutyl phosphate + formate + H(+)</text>
        <dbReference type="Rhea" id="RHEA:18457"/>
        <dbReference type="ChEBI" id="CHEBI:15378"/>
        <dbReference type="ChEBI" id="CHEBI:15740"/>
        <dbReference type="ChEBI" id="CHEBI:58121"/>
        <dbReference type="ChEBI" id="CHEBI:58830"/>
        <dbReference type="EC" id="4.1.99.12"/>
    </reaction>
</comment>
<comment type="catalytic activity">
    <reaction evidence="1">
        <text>GTP + 4 H2O = 2,5-diamino-6-hydroxy-4-(5-phosphoribosylamino)-pyrimidine + formate + 2 phosphate + 3 H(+)</text>
        <dbReference type="Rhea" id="RHEA:23704"/>
        <dbReference type="ChEBI" id="CHEBI:15377"/>
        <dbReference type="ChEBI" id="CHEBI:15378"/>
        <dbReference type="ChEBI" id="CHEBI:15740"/>
        <dbReference type="ChEBI" id="CHEBI:37565"/>
        <dbReference type="ChEBI" id="CHEBI:43474"/>
        <dbReference type="ChEBI" id="CHEBI:58614"/>
        <dbReference type="EC" id="3.5.4.25"/>
    </reaction>
</comment>
<comment type="cofactor">
    <cofactor evidence="1">
        <name>Mg(2+)</name>
        <dbReference type="ChEBI" id="CHEBI:18420"/>
    </cofactor>
    <cofactor evidence="1">
        <name>Mn(2+)</name>
        <dbReference type="ChEBI" id="CHEBI:29035"/>
    </cofactor>
    <text evidence="1">Binds 2 divalent metal cations per subunit. Magnesium or manganese.</text>
</comment>
<comment type="cofactor">
    <cofactor evidence="1">
        <name>Zn(2+)</name>
        <dbReference type="ChEBI" id="CHEBI:29105"/>
    </cofactor>
    <text evidence="1">Binds 1 zinc ion per subunit.</text>
</comment>
<comment type="pathway">
    <text evidence="1">Cofactor biosynthesis; riboflavin biosynthesis; 2-hydroxy-3-oxobutyl phosphate from D-ribulose 5-phosphate: step 1/1.</text>
</comment>
<comment type="pathway">
    <text evidence="1">Cofactor biosynthesis; riboflavin biosynthesis; 5-amino-6-(D-ribitylamino)uracil from GTP: step 1/4.</text>
</comment>
<comment type="similarity">
    <text evidence="1">In the N-terminal section; belongs to the DHBP synthase family.</text>
</comment>
<comment type="similarity">
    <text evidence="1">In the C-terminal section; belongs to the GTP cyclohydrolase II family.</text>
</comment>
<keyword id="KW-0342">GTP-binding</keyword>
<keyword id="KW-0378">Hydrolase</keyword>
<keyword id="KW-0456">Lyase</keyword>
<keyword id="KW-0460">Magnesium</keyword>
<keyword id="KW-0464">Manganese</keyword>
<keyword id="KW-0479">Metal-binding</keyword>
<keyword id="KW-0511">Multifunctional enzyme</keyword>
<keyword id="KW-0547">Nucleotide-binding</keyword>
<keyword id="KW-0686">Riboflavin biosynthesis</keyword>
<keyword id="KW-0862">Zinc</keyword>
<protein>
    <recommendedName>
        <fullName evidence="1">Riboflavin biosynthesis protein RibBA</fullName>
    </recommendedName>
    <domain>
        <recommendedName>
            <fullName evidence="1">3,4-dihydroxy-2-butanone 4-phosphate synthase</fullName>
            <shortName evidence="1">DHBP synthase</shortName>
            <ecNumber evidence="1">4.1.99.12</ecNumber>
        </recommendedName>
    </domain>
    <domain>
        <recommendedName>
            <fullName evidence="1">GTP cyclohydrolase-2</fullName>
            <ecNumber evidence="1">3.5.4.25</ecNumber>
        </recommendedName>
        <alternativeName>
            <fullName evidence="1">GTP cyclohydrolase II</fullName>
        </alternativeName>
    </domain>
</protein>
<evidence type="ECO:0000255" key="1">
    <source>
        <dbReference type="HAMAP-Rule" id="MF_01283"/>
    </source>
</evidence>
<sequence>MQFDNIDSALMALKNGETIIVVDDENRENEGDLVAVTEWMNDNTINFMAKEARGLICAPVSKDIAQRLDLVQMVDDNSDIFGTQFTVSIDHVDTTTGISAYERTLTAKKLIDPSSEAKDFNRPGHLFPLVAQDKGVLARNGHTEAAVDLAKLTGAKPAGVICEIMNDDGTMAKGQDLQNFKEKHQLKMITIDDLIEYRKKLEPEIEFKAKVKMPTDFGTFDMYGFKATYTDEEIVVLTKGAIRQHENVRLHSACLTGDIFHSQRCDCGAQLESSMKYINEHGGMIIYLPQEGRGIGLLNKLRAYELIEQGYDTVTANLALGFDEDLRDYHIAAQILKYFNIEHINLLSNNPSKFEGLKQYGIDIAERIEVIVPETVHNHDYMVTKKIKMGHLI</sequence>
<reference key="1">
    <citation type="journal article" date="2001" name="Lancet">
        <title>Whole genome sequencing of meticillin-resistant Staphylococcus aureus.</title>
        <authorList>
            <person name="Kuroda M."/>
            <person name="Ohta T."/>
            <person name="Uchiyama I."/>
            <person name="Baba T."/>
            <person name="Yuzawa H."/>
            <person name="Kobayashi I."/>
            <person name="Cui L."/>
            <person name="Oguchi A."/>
            <person name="Aoki K."/>
            <person name="Nagai Y."/>
            <person name="Lian J.-Q."/>
            <person name="Ito T."/>
            <person name="Kanamori M."/>
            <person name="Matsumaru H."/>
            <person name="Maruyama A."/>
            <person name="Murakami H."/>
            <person name="Hosoyama A."/>
            <person name="Mizutani-Ui Y."/>
            <person name="Takahashi N.K."/>
            <person name="Sawano T."/>
            <person name="Inoue R."/>
            <person name="Kaito C."/>
            <person name="Sekimizu K."/>
            <person name="Hirakawa H."/>
            <person name="Kuhara S."/>
            <person name="Goto S."/>
            <person name="Yabuzaki J."/>
            <person name="Kanehisa M."/>
            <person name="Yamashita A."/>
            <person name="Oshima K."/>
            <person name="Furuya K."/>
            <person name="Yoshino C."/>
            <person name="Shiba T."/>
            <person name="Hattori M."/>
            <person name="Ogasawara N."/>
            <person name="Hayashi H."/>
            <person name="Hiramatsu K."/>
        </authorList>
    </citation>
    <scope>NUCLEOTIDE SEQUENCE [LARGE SCALE GENOMIC DNA]</scope>
    <source>
        <strain>N315</strain>
    </source>
</reference>
<name>RIBBA_STAAN</name>
<gene>
    <name evidence="1" type="primary">ribBA</name>
    <name type="synonym">ribA</name>
    <name type="ordered locus">SA1587</name>
</gene>
<proteinExistence type="inferred from homology"/>
<organism>
    <name type="scientific">Staphylococcus aureus (strain N315)</name>
    <dbReference type="NCBI Taxonomy" id="158879"/>
    <lineage>
        <taxon>Bacteria</taxon>
        <taxon>Bacillati</taxon>
        <taxon>Bacillota</taxon>
        <taxon>Bacilli</taxon>
        <taxon>Bacillales</taxon>
        <taxon>Staphylococcaceae</taxon>
        <taxon>Staphylococcus</taxon>
    </lineage>
</organism>
<accession>Q7A511</accession>
<dbReference type="EC" id="4.1.99.12" evidence="1"/>
<dbReference type="EC" id="3.5.4.25" evidence="1"/>
<dbReference type="EMBL" id="BA000018">
    <property type="protein sequence ID" value="BAB42855.1"/>
    <property type="molecule type" value="Genomic_DNA"/>
</dbReference>
<dbReference type="PIR" id="B89962">
    <property type="entry name" value="B89962"/>
</dbReference>
<dbReference type="SMR" id="Q7A511"/>
<dbReference type="EnsemblBacteria" id="BAB42855">
    <property type="protein sequence ID" value="BAB42855"/>
    <property type="gene ID" value="BAB42855"/>
</dbReference>
<dbReference type="KEGG" id="sau:SA1587"/>
<dbReference type="HOGENOM" id="CLU_020273_1_2_9"/>
<dbReference type="UniPathway" id="UPA00275">
    <property type="reaction ID" value="UER00399"/>
</dbReference>
<dbReference type="UniPathway" id="UPA00275">
    <property type="reaction ID" value="UER00400"/>
</dbReference>
<dbReference type="GO" id="GO:0005829">
    <property type="term" value="C:cytosol"/>
    <property type="evidence" value="ECO:0007669"/>
    <property type="project" value="TreeGrafter"/>
</dbReference>
<dbReference type="GO" id="GO:0008686">
    <property type="term" value="F:3,4-dihydroxy-2-butanone-4-phosphate synthase activity"/>
    <property type="evidence" value="ECO:0007669"/>
    <property type="project" value="UniProtKB-UniRule"/>
</dbReference>
<dbReference type="GO" id="GO:0005525">
    <property type="term" value="F:GTP binding"/>
    <property type="evidence" value="ECO:0007669"/>
    <property type="project" value="UniProtKB-KW"/>
</dbReference>
<dbReference type="GO" id="GO:0003935">
    <property type="term" value="F:GTP cyclohydrolase II activity"/>
    <property type="evidence" value="ECO:0007669"/>
    <property type="project" value="UniProtKB-UniRule"/>
</dbReference>
<dbReference type="GO" id="GO:0000287">
    <property type="term" value="F:magnesium ion binding"/>
    <property type="evidence" value="ECO:0007669"/>
    <property type="project" value="UniProtKB-UniRule"/>
</dbReference>
<dbReference type="GO" id="GO:0030145">
    <property type="term" value="F:manganese ion binding"/>
    <property type="evidence" value="ECO:0007669"/>
    <property type="project" value="UniProtKB-UniRule"/>
</dbReference>
<dbReference type="GO" id="GO:0008270">
    <property type="term" value="F:zinc ion binding"/>
    <property type="evidence" value="ECO:0007669"/>
    <property type="project" value="UniProtKB-UniRule"/>
</dbReference>
<dbReference type="GO" id="GO:0009231">
    <property type="term" value="P:riboflavin biosynthetic process"/>
    <property type="evidence" value="ECO:0007669"/>
    <property type="project" value="UniProtKB-UniRule"/>
</dbReference>
<dbReference type="CDD" id="cd00641">
    <property type="entry name" value="GTP_cyclohydro2"/>
    <property type="match status" value="1"/>
</dbReference>
<dbReference type="FunFam" id="3.40.50.10990:FF:000002">
    <property type="entry name" value="GTP cyclohydrolase-2"/>
    <property type="match status" value="1"/>
</dbReference>
<dbReference type="FunFam" id="3.90.870.10:FF:000001">
    <property type="entry name" value="Riboflavin biosynthesis protein RibBA"/>
    <property type="match status" value="1"/>
</dbReference>
<dbReference type="Gene3D" id="3.90.870.10">
    <property type="entry name" value="DHBP synthase"/>
    <property type="match status" value="1"/>
</dbReference>
<dbReference type="Gene3D" id="3.40.50.10990">
    <property type="entry name" value="GTP cyclohydrolase II"/>
    <property type="match status" value="1"/>
</dbReference>
<dbReference type="HAMAP" id="MF_00179">
    <property type="entry name" value="RibA"/>
    <property type="match status" value="1"/>
</dbReference>
<dbReference type="HAMAP" id="MF_00180">
    <property type="entry name" value="RibB"/>
    <property type="match status" value="1"/>
</dbReference>
<dbReference type="HAMAP" id="MF_01283">
    <property type="entry name" value="RibBA"/>
    <property type="match status" value="1"/>
</dbReference>
<dbReference type="InterPro" id="IPR017945">
    <property type="entry name" value="DHBP_synth_RibB-like_a/b_dom"/>
</dbReference>
<dbReference type="InterPro" id="IPR000422">
    <property type="entry name" value="DHBP_synthase_RibB"/>
</dbReference>
<dbReference type="InterPro" id="IPR032677">
    <property type="entry name" value="GTP_cyclohydro_II"/>
</dbReference>
<dbReference type="InterPro" id="IPR000926">
    <property type="entry name" value="RibA"/>
</dbReference>
<dbReference type="InterPro" id="IPR036144">
    <property type="entry name" value="RibA-like_sf"/>
</dbReference>
<dbReference type="InterPro" id="IPR016299">
    <property type="entry name" value="Riboflavin_synth_RibBA"/>
</dbReference>
<dbReference type="NCBIfam" id="NF001591">
    <property type="entry name" value="PRK00393.1"/>
    <property type="match status" value="1"/>
</dbReference>
<dbReference type="NCBIfam" id="TIGR00505">
    <property type="entry name" value="ribA"/>
    <property type="match status" value="1"/>
</dbReference>
<dbReference type="NCBIfam" id="TIGR00506">
    <property type="entry name" value="ribB"/>
    <property type="match status" value="1"/>
</dbReference>
<dbReference type="PANTHER" id="PTHR21327:SF18">
    <property type="entry name" value="3,4-DIHYDROXY-2-BUTANONE 4-PHOSPHATE SYNTHASE"/>
    <property type="match status" value="1"/>
</dbReference>
<dbReference type="PANTHER" id="PTHR21327">
    <property type="entry name" value="GTP CYCLOHYDROLASE II-RELATED"/>
    <property type="match status" value="1"/>
</dbReference>
<dbReference type="Pfam" id="PF00926">
    <property type="entry name" value="DHBP_synthase"/>
    <property type="match status" value="1"/>
</dbReference>
<dbReference type="Pfam" id="PF00925">
    <property type="entry name" value="GTP_cyclohydro2"/>
    <property type="match status" value="1"/>
</dbReference>
<dbReference type="PIRSF" id="PIRSF001259">
    <property type="entry name" value="RibA"/>
    <property type="match status" value="1"/>
</dbReference>
<dbReference type="SUPFAM" id="SSF142695">
    <property type="entry name" value="RibA-like"/>
    <property type="match status" value="1"/>
</dbReference>
<dbReference type="SUPFAM" id="SSF55821">
    <property type="entry name" value="YrdC/RibB"/>
    <property type="match status" value="1"/>
</dbReference>